<keyword id="KW-0050">Antiport</keyword>
<keyword id="KW-0997">Cell inner membrane</keyword>
<keyword id="KW-1003">Cell membrane</keyword>
<keyword id="KW-0406">Ion transport</keyword>
<keyword id="KW-0472">Membrane</keyword>
<keyword id="KW-0915">Sodium</keyword>
<keyword id="KW-0739">Sodium transport</keyword>
<keyword id="KW-0812">Transmembrane</keyword>
<keyword id="KW-1133">Transmembrane helix</keyword>
<keyword id="KW-0813">Transport</keyword>
<gene>
    <name type="primary">nhaD</name>
</gene>
<accession>O66163</accession>
<name>NHAD_VIBPH</name>
<proteinExistence type="evidence at protein level"/>
<comment type="function">
    <text evidence="2">Na(+)/H(+) antiporter that extrudes sodium in exchange for external protons. Can also transport lithium.</text>
</comment>
<comment type="biophysicochemical properties">
    <phDependence>
        <text evidence="2">Optimum pH is 8.5-9.0. Inactive at pH 7.0 or 7.5.</text>
    </phDependence>
</comment>
<comment type="subcellular location">
    <subcellularLocation>
        <location evidence="2">Cell inner membrane</location>
        <topology evidence="2">Multi-pass membrane protein</topology>
    </subcellularLocation>
</comment>
<comment type="similarity">
    <text evidence="3">Belongs to the NhaD Na(+)/H(+) (TC 2.A.62) antiporter family.</text>
</comment>
<comment type="caution">
    <text evidence="3">The N-terminus is shorter than in orthologs.</text>
</comment>
<feature type="chain" id="PRO_0000423662" description="Na(+)/H(+) antiporter NhaD">
    <location>
        <begin position="1"/>
        <end position="414"/>
    </location>
</feature>
<feature type="transmembrane region" description="Helical" evidence="1">
    <location>
        <begin position="6"/>
        <end position="26"/>
    </location>
</feature>
<feature type="transmembrane region" description="Helical" evidence="1">
    <location>
        <begin position="39"/>
        <end position="59"/>
    </location>
</feature>
<feature type="transmembrane region" description="Helical" evidence="1">
    <location>
        <begin position="77"/>
        <end position="97"/>
    </location>
</feature>
<feature type="transmembrane region" description="Helical" evidence="1">
    <location>
        <begin position="120"/>
        <end position="140"/>
    </location>
</feature>
<feature type="transmembrane region" description="Helical" evidence="1">
    <location>
        <begin position="162"/>
        <end position="182"/>
    </location>
</feature>
<feature type="transmembrane region" description="Helical" evidence="1">
    <location>
        <begin position="203"/>
        <end position="223"/>
    </location>
</feature>
<feature type="transmembrane region" description="Helical" evidence="1">
    <location>
        <begin position="224"/>
        <end position="244"/>
    </location>
</feature>
<feature type="transmembrane region" description="Helical" evidence="1">
    <location>
        <begin position="289"/>
        <end position="309"/>
    </location>
</feature>
<feature type="transmembrane region" description="Helical" evidence="1">
    <location>
        <begin position="327"/>
        <end position="347"/>
    </location>
</feature>
<feature type="transmembrane region" description="Helical" evidence="1">
    <location>
        <begin position="364"/>
        <end position="384"/>
    </location>
</feature>
<feature type="transmembrane region" description="Helical" evidence="1">
    <location>
        <begin position="392"/>
        <end position="412"/>
    </location>
</feature>
<protein>
    <recommendedName>
        <fullName>Na(+)/H(+) antiporter NhaD</fullName>
    </recommendedName>
    <alternativeName>
        <fullName>Sodium/proton antiporter NhaD</fullName>
    </alternativeName>
</protein>
<reference key="1">
    <citation type="journal article" date="1998" name="Biochim. Biophys. Acta">
        <title>A new Na+/H+ antiporter, NhaD, of Vibrio parahaemolyticus.</title>
        <authorList>
            <person name="Nozaki K."/>
            <person name="Kuroda T."/>
            <person name="Mizushima T."/>
            <person name="Tsuchiya T."/>
        </authorList>
    </citation>
    <scope>NUCLEOTIDE SEQUENCE [GENOMIC DNA]</scope>
    <scope>FUNCTION</scope>
    <scope>BIOPHYSICOCHEMICAL PROPERTIES</scope>
    <scope>SUBCELLULAR LOCATION</scope>
    <scope>GENE NAME</scope>
    <source>
        <strain>AQ3334</strain>
    </source>
</reference>
<organism>
    <name type="scientific">Vibrio parahaemolyticus</name>
    <dbReference type="NCBI Taxonomy" id="670"/>
    <lineage>
        <taxon>Bacteria</taxon>
        <taxon>Pseudomonadati</taxon>
        <taxon>Pseudomonadota</taxon>
        <taxon>Gammaproteobacteria</taxon>
        <taxon>Vibrionales</taxon>
        <taxon>Vibrionaceae</taxon>
        <taxon>Vibrio</taxon>
    </lineage>
</organism>
<evidence type="ECO:0000255" key="1"/>
<evidence type="ECO:0000269" key="2">
    <source>
    </source>
</evidence>
<evidence type="ECO:0000305" key="3"/>
<dbReference type="EMBL" id="AB006008">
    <property type="protein sequence ID" value="BAA25994.1"/>
    <property type="molecule type" value="Genomic_DNA"/>
</dbReference>
<dbReference type="SMR" id="O66163"/>
<dbReference type="TCDB" id="2.A.62.1.1">
    <property type="family name" value="the nhad na(+):h(+) antiporter (nhad) family"/>
</dbReference>
<dbReference type="GO" id="GO:0005886">
    <property type="term" value="C:plasma membrane"/>
    <property type="evidence" value="ECO:0007669"/>
    <property type="project" value="UniProtKB-SubCell"/>
</dbReference>
<dbReference type="GO" id="GO:0015297">
    <property type="term" value="F:antiporter activity"/>
    <property type="evidence" value="ECO:0007669"/>
    <property type="project" value="UniProtKB-KW"/>
</dbReference>
<dbReference type="GO" id="GO:0006814">
    <property type="term" value="P:sodium ion transport"/>
    <property type="evidence" value="ECO:0007669"/>
    <property type="project" value="UniProtKB-KW"/>
</dbReference>
<dbReference type="InterPro" id="IPR004680">
    <property type="entry name" value="Cit_transptr-like_dom"/>
</dbReference>
<dbReference type="InterPro" id="IPR004672">
    <property type="entry name" value="Na(+)/H(+)_antiporter_NhaD"/>
</dbReference>
<dbReference type="InterPro" id="IPR045016">
    <property type="entry name" value="NhaD-like"/>
</dbReference>
<dbReference type="NCBIfam" id="TIGR00775">
    <property type="entry name" value="NhaD"/>
    <property type="match status" value="1"/>
</dbReference>
<dbReference type="NCBIfam" id="NF038006">
    <property type="entry name" value="NhaD_1"/>
    <property type="match status" value="1"/>
</dbReference>
<dbReference type="PANTHER" id="PTHR43269">
    <property type="entry name" value="SODIUM/PROTON ANTIPORTER 1-RELATED"/>
    <property type="match status" value="1"/>
</dbReference>
<dbReference type="PANTHER" id="PTHR43269:SF2">
    <property type="entry name" value="SODIUM_PROTON ANTIPORTER 1-RELATED"/>
    <property type="match status" value="1"/>
</dbReference>
<dbReference type="Pfam" id="PF03600">
    <property type="entry name" value="CitMHS"/>
    <property type="match status" value="1"/>
</dbReference>
<sequence>MRKSKPVLLAAGLIWILIGYTFAQHHQQDVAKAALEHNLLEYAELLLFLLVAMTYINAMEERKLFDALQAWMVGKGFGFKKLFWLTGFLAFVISPIADNLTTALLMCAVVMKVSGDNPRFVNLACINIVIAANAGGAFSPFGDITTLMVWQAGHVRFSEFMPLFVPSLINYVVPAFLMALFVPNTKPNTIHEHVELKRGARRIVLLFVLTIATAVSFHAVLHFPPVVGMMMGLAYLQFFGYFLRKTLKHSLAKKAAMAIANGDDHALKRLGSVVPFDVFHRVSRAEWDTLLFFYGVVMCVGGLSLLGYLELVSNVMYTQWNPVWANVMVGVLSAIVDNIPVMFAVLTMDPSMSTGNWLLVTLTAGVGGSLLSIGSAAGVALMGAARGQYTFFGHLKWTPVIALGYAPVLPLICG</sequence>